<feature type="chain" id="PRO_1000063254" description="Putative transport protein KPN78578_40470">
    <location>
        <begin position="1"/>
        <end position="553"/>
    </location>
</feature>
<feature type="transmembrane region" description="Helical" evidence="1">
    <location>
        <begin position="4"/>
        <end position="24"/>
    </location>
</feature>
<feature type="transmembrane region" description="Helical" evidence="1">
    <location>
        <begin position="28"/>
        <end position="48"/>
    </location>
</feature>
<feature type="transmembrane region" description="Helical" evidence="1">
    <location>
        <begin position="65"/>
        <end position="85"/>
    </location>
</feature>
<feature type="transmembrane region" description="Helical" evidence="1">
    <location>
        <begin position="95"/>
        <end position="115"/>
    </location>
</feature>
<feature type="transmembrane region" description="Helical" evidence="1">
    <location>
        <begin position="158"/>
        <end position="178"/>
    </location>
</feature>
<feature type="transmembrane region" description="Helical" evidence="1">
    <location>
        <begin position="371"/>
        <end position="391"/>
    </location>
</feature>
<feature type="transmembrane region" description="Helical" evidence="1">
    <location>
        <begin position="403"/>
        <end position="425"/>
    </location>
</feature>
<feature type="transmembrane region" description="Helical" evidence="1">
    <location>
        <begin position="437"/>
        <end position="457"/>
    </location>
</feature>
<feature type="transmembrane region" description="Helical" evidence="1">
    <location>
        <begin position="464"/>
        <end position="484"/>
    </location>
</feature>
<feature type="transmembrane region" description="Helical" evidence="1">
    <location>
        <begin position="493"/>
        <end position="513"/>
    </location>
</feature>
<feature type="transmembrane region" description="Helical" evidence="1">
    <location>
        <begin position="532"/>
        <end position="552"/>
    </location>
</feature>
<feature type="domain" description="RCK C-terminal 1" evidence="1">
    <location>
        <begin position="192"/>
        <end position="276"/>
    </location>
</feature>
<feature type="domain" description="RCK C-terminal 2" evidence="1">
    <location>
        <begin position="279"/>
        <end position="361"/>
    </location>
</feature>
<evidence type="ECO:0000255" key="1">
    <source>
        <dbReference type="HAMAP-Rule" id="MF_01016"/>
    </source>
</evidence>
<gene>
    <name type="ordered locus">KPN78578_40470</name>
    <name type="ORF">KPN_04088</name>
</gene>
<keyword id="KW-1003">Cell membrane</keyword>
<keyword id="KW-0472">Membrane</keyword>
<keyword id="KW-0677">Repeat</keyword>
<keyword id="KW-0812">Transmembrane</keyword>
<keyword id="KW-1133">Transmembrane helix</keyword>
<keyword id="KW-0813">Transport</keyword>
<proteinExistence type="inferred from homology"/>
<accession>A6TFY7</accession>
<dbReference type="EMBL" id="CP000647">
    <property type="protein sequence ID" value="ABR79471.1"/>
    <property type="molecule type" value="Genomic_DNA"/>
</dbReference>
<dbReference type="RefSeq" id="WP_015959172.1">
    <property type="nucleotide sequence ID" value="NC_009648.1"/>
</dbReference>
<dbReference type="SMR" id="A6TFY7"/>
<dbReference type="STRING" id="272620.KPN_04088"/>
<dbReference type="PaxDb" id="272620-KPN_04088"/>
<dbReference type="EnsemblBacteria" id="ABR79471">
    <property type="protein sequence ID" value="ABR79471"/>
    <property type="gene ID" value="KPN_04088"/>
</dbReference>
<dbReference type="KEGG" id="kpn:KPN_04088"/>
<dbReference type="HOGENOM" id="CLU_035023_3_1_6"/>
<dbReference type="Proteomes" id="UP000000265">
    <property type="component" value="Chromosome"/>
</dbReference>
<dbReference type="GO" id="GO:0005886">
    <property type="term" value="C:plasma membrane"/>
    <property type="evidence" value="ECO:0007669"/>
    <property type="project" value="UniProtKB-SubCell"/>
</dbReference>
<dbReference type="GO" id="GO:0008324">
    <property type="term" value="F:monoatomic cation transmembrane transporter activity"/>
    <property type="evidence" value="ECO:0007669"/>
    <property type="project" value="InterPro"/>
</dbReference>
<dbReference type="GO" id="GO:0006813">
    <property type="term" value="P:potassium ion transport"/>
    <property type="evidence" value="ECO:0007669"/>
    <property type="project" value="InterPro"/>
</dbReference>
<dbReference type="Gene3D" id="3.30.70.1450">
    <property type="entry name" value="Regulator of K+ conductance, C-terminal domain"/>
    <property type="match status" value="2"/>
</dbReference>
<dbReference type="HAMAP" id="MF_01016">
    <property type="entry name" value="YidE"/>
    <property type="match status" value="1"/>
</dbReference>
<dbReference type="InterPro" id="IPR050144">
    <property type="entry name" value="AAE_transporter"/>
</dbReference>
<dbReference type="InterPro" id="IPR006037">
    <property type="entry name" value="RCK_C"/>
</dbReference>
<dbReference type="InterPro" id="IPR036721">
    <property type="entry name" value="RCK_C_sf"/>
</dbReference>
<dbReference type="InterPro" id="IPR023018">
    <property type="entry name" value="Transpt_YidE_put"/>
</dbReference>
<dbReference type="InterPro" id="IPR006512">
    <property type="entry name" value="YidE_YbjL"/>
</dbReference>
<dbReference type="NCBIfam" id="NF003007">
    <property type="entry name" value="PRK03818.1"/>
    <property type="match status" value="1"/>
</dbReference>
<dbReference type="NCBIfam" id="TIGR01625">
    <property type="entry name" value="YidE_YbjL_dupl"/>
    <property type="match status" value="2"/>
</dbReference>
<dbReference type="PANTHER" id="PTHR30445">
    <property type="entry name" value="K(+)_H(+) ANTIPORTER SUBUNIT KHTT"/>
    <property type="match status" value="1"/>
</dbReference>
<dbReference type="PANTHER" id="PTHR30445:SF3">
    <property type="entry name" value="TRANSPORT PROTEIN YIDE-RELATED"/>
    <property type="match status" value="1"/>
</dbReference>
<dbReference type="Pfam" id="PF06826">
    <property type="entry name" value="Asp-Al_Ex"/>
    <property type="match status" value="2"/>
</dbReference>
<dbReference type="Pfam" id="PF02080">
    <property type="entry name" value="TrkA_C"/>
    <property type="match status" value="1"/>
</dbReference>
<dbReference type="SUPFAM" id="SSF116726">
    <property type="entry name" value="TrkA C-terminal domain-like"/>
    <property type="match status" value="2"/>
</dbReference>
<dbReference type="PROSITE" id="PS51202">
    <property type="entry name" value="RCK_C"/>
    <property type="match status" value="2"/>
</dbReference>
<comment type="subcellular location">
    <subcellularLocation>
        <location evidence="1">Cell membrane</location>
        <topology evidence="1">Multi-pass membrane protein</topology>
    </subcellularLocation>
</comment>
<comment type="similarity">
    <text evidence="1">Belongs to the AAE transporter (TC 2.A.81) family. YidE subfamily.</text>
</comment>
<protein>
    <recommendedName>
        <fullName evidence="1">Putative transport protein KPN78578_40470</fullName>
    </recommendedName>
</protein>
<name>Y4047_KLEP7</name>
<sequence length="553" mass="58897">MSEIALTVSVLALVAVVGLWIGNVKIRGVGFGIGGVLFGGIIVGHFVDQAGVALSSPMLHFIQEFGLILFVYTIGIQVGPGFFASLRVSGLRLNLFAILIVILGGLVTAVLHKLFNIPLPVVLGIFSGAVTNTPALGAGQQILRDLGVPFEVVDQMGMSYAMAYPFGICGILLTMWLVRLFFRINVEKEAQRFEESSGNGHAHLHTINVRVENPNLNQMAIQDVPMLNNDNIVCSRLKRGELLMVPAPGTLIQAGDLLHLVGRPEDLHNAQLVIGQEVATSLSTRGTDLKVERVVVTNEKVLGKKIRDLHVKQRYDVVISRLNRAGVELVASSSASLQFGDILNLVGRPEAIDAVAAELGNAQQKLQQVQMLPVFIGIGLGVLLGSIPLFIPGFPAALKLGLAGGPLIMALILGRIGSIGKLYWFMPPSANLALRELGIVLFLAVVGLKSGGDFVATLTQGDGLSWIAYGIFITAIPLLTVGVLARMLAKMNYLTLCGMLAGSMTDPPALAFANNLHATSGAAALSYATVYPLVMFLRIITPQLLAVLFWGLS</sequence>
<reference key="1">
    <citation type="submission" date="2006-09" db="EMBL/GenBank/DDBJ databases">
        <authorList>
            <consortium name="The Klebsiella pneumonia Genome Sequencing Project"/>
            <person name="McClelland M."/>
            <person name="Sanderson E.K."/>
            <person name="Spieth J."/>
            <person name="Clifton W.S."/>
            <person name="Latreille P."/>
            <person name="Sabo A."/>
            <person name="Pepin K."/>
            <person name="Bhonagiri V."/>
            <person name="Porwollik S."/>
            <person name="Ali J."/>
            <person name="Wilson R.K."/>
        </authorList>
    </citation>
    <scope>NUCLEOTIDE SEQUENCE [LARGE SCALE GENOMIC DNA]</scope>
    <source>
        <strain>ATCC 700721 / MGH 78578</strain>
    </source>
</reference>
<organism>
    <name type="scientific">Klebsiella pneumoniae subsp. pneumoniae (strain ATCC 700721 / MGH 78578)</name>
    <dbReference type="NCBI Taxonomy" id="272620"/>
    <lineage>
        <taxon>Bacteria</taxon>
        <taxon>Pseudomonadati</taxon>
        <taxon>Pseudomonadota</taxon>
        <taxon>Gammaproteobacteria</taxon>
        <taxon>Enterobacterales</taxon>
        <taxon>Enterobacteriaceae</taxon>
        <taxon>Klebsiella/Raoultella group</taxon>
        <taxon>Klebsiella</taxon>
        <taxon>Klebsiella pneumoniae complex</taxon>
    </lineage>
</organism>